<evidence type="ECO:0000255" key="1">
    <source>
        <dbReference type="HAMAP-Rule" id="MF_00272"/>
    </source>
</evidence>
<evidence type="ECO:0000255" key="2">
    <source>
        <dbReference type="PROSITE-ProRule" id="PRU01066"/>
    </source>
</evidence>
<organism>
    <name type="scientific">Bacillus cereus (strain ATCC 10987 / NRS 248)</name>
    <dbReference type="NCBI Taxonomy" id="222523"/>
    <lineage>
        <taxon>Bacteria</taxon>
        <taxon>Bacillati</taxon>
        <taxon>Bacillota</taxon>
        <taxon>Bacilli</taxon>
        <taxon>Bacillales</taxon>
        <taxon>Bacillaceae</taxon>
        <taxon>Bacillus</taxon>
        <taxon>Bacillus cereus group</taxon>
    </lineage>
</organism>
<comment type="function">
    <text evidence="1">The glycine cleavage system catalyzes the degradation of glycine. The H protein shuttles the methylamine group of glycine from the P protein to the T protein.</text>
</comment>
<comment type="function">
    <text evidence="1">Is also involved in protein lipoylation via its role as an octanoyl/lipoyl carrier protein intermediate.</text>
</comment>
<comment type="cofactor">
    <cofactor evidence="1">
        <name>(R)-lipoate</name>
        <dbReference type="ChEBI" id="CHEBI:83088"/>
    </cofactor>
    <text evidence="1">Binds 1 lipoyl cofactor covalently.</text>
</comment>
<comment type="subunit">
    <text evidence="1">The glycine cleavage system is composed of four proteins: P, T, L and H.</text>
</comment>
<comment type="similarity">
    <text evidence="1">Belongs to the GcvH family.</text>
</comment>
<proteinExistence type="inferred from homology"/>
<protein>
    <recommendedName>
        <fullName evidence="1">Glycine cleavage system H protein</fullName>
    </recommendedName>
    <alternativeName>
        <fullName evidence="1">Octanoyl/lipoyl carrier protein</fullName>
    </alternativeName>
</protein>
<reference key="1">
    <citation type="journal article" date="2004" name="Nucleic Acids Res.">
        <title>The genome sequence of Bacillus cereus ATCC 10987 reveals metabolic adaptations and a large plasmid related to Bacillus anthracis pXO1.</title>
        <authorList>
            <person name="Rasko D.A."/>
            <person name="Ravel J."/>
            <person name="Oekstad O.A."/>
            <person name="Helgason E."/>
            <person name="Cer R.Z."/>
            <person name="Jiang L."/>
            <person name="Shores K.A."/>
            <person name="Fouts D.E."/>
            <person name="Tourasse N.J."/>
            <person name="Angiuoli S.V."/>
            <person name="Kolonay J.F."/>
            <person name="Nelson W.C."/>
            <person name="Kolstoe A.-B."/>
            <person name="Fraser C.M."/>
            <person name="Read T.D."/>
        </authorList>
    </citation>
    <scope>NUCLEOTIDE SEQUENCE [LARGE SCALE GENOMIC DNA]</scope>
    <source>
        <strain>ATCC 10987 / NRS 248</strain>
    </source>
</reference>
<keyword id="KW-0450">Lipoyl</keyword>
<accession>Q72Y91</accession>
<sequence length="127" mass="14018">MSIPNNLRYSEEHEWVKTEGNEVVIGITHFAQSELGDIVFVELPEVGATIEADEPFGSVESVKTVSELYAPVSGKVVAVNEELSDQPELVNESPYEGAWMVKVELSDASQVEKLLTAEKYAEMTNQD</sequence>
<gene>
    <name evidence="1" type="primary">gcvH</name>
    <name type="ordered locus">BCE_5130</name>
</gene>
<dbReference type="EMBL" id="AE017194">
    <property type="protein sequence ID" value="AAS44031.1"/>
    <property type="molecule type" value="Genomic_DNA"/>
</dbReference>
<dbReference type="SMR" id="Q72Y91"/>
<dbReference type="KEGG" id="bca:BCE_5130"/>
<dbReference type="HOGENOM" id="CLU_097408_2_2_9"/>
<dbReference type="Proteomes" id="UP000002527">
    <property type="component" value="Chromosome"/>
</dbReference>
<dbReference type="GO" id="GO:0005829">
    <property type="term" value="C:cytosol"/>
    <property type="evidence" value="ECO:0007669"/>
    <property type="project" value="TreeGrafter"/>
</dbReference>
<dbReference type="GO" id="GO:0005960">
    <property type="term" value="C:glycine cleavage complex"/>
    <property type="evidence" value="ECO:0007669"/>
    <property type="project" value="InterPro"/>
</dbReference>
<dbReference type="GO" id="GO:0019464">
    <property type="term" value="P:glycine decarboxylation via glycine cleavage system"/>
    <property type="evidence" value="ECO:0007669"/>
    <property type="project" value="UniProtKB-UniRule"/>
</dbReference>
<dbReference type="CDD" id="cd06848">
    <property type="entry name" value="GCS_H"/>
    <property type="match status" value="1"/>
</dbReference>
<dbReference type="Gene3D" id="2.40.50.100">
    <property type="match status" value="1"/>
</dbReference>
<dbReference type="HAMAP" id="MF_00272">
    <property type="entry name" value="GcvH"/>
    <property type="match status" value="1"/>
</dbReference>
<dbReference type="InterPro" id="IPR003016">
    <property type="entry name" value="2-oxoA_DH_lipoyl-BS"/>
</dbReference>
<dbReference type="InterPro" id="IPR000089">
    <property type="entry name" value="Biotin_lipoyl"/>
</dbReference>
<dbReference type="InterPro" id="IPR002930">
    <property type="entry name" value="GCV_H"/>
</dbReference>
<dbReference type="InterPro" id="IPR033753">
    <property type="entry name" value="GCV_H/Fam206"/>
</dbReference>
<dbReference type="InterPro" id="IPR017453">
    <property type="entry name" value="GCV_H_sub"/>
</dbReference>
<dbReference type="InterPro" id="IPR011053">
    <property type="entry name" value="Single_hybrid_motif"/>
</dbReference>
<dbReference type="NCBIfam" id="TIGR00527">
    <property type="entry name" value="gcvH"/>
    <property type="match status" value="1"/>
</dbReference>
<dbReference type="NCBIfam" id="NF002270">
    <property type="entry name" value="PRK01202.1"/>
    <property type="match status" value="1"/>
</dbReference>
<dbReference type="PANTHER" id="PTHR11715">
    <property type="entry name" value="GLYCINE CLEAVAGE SYSTEM H PROTEIN"/>
    <property type="match status" value="1"/>
</dbReference>
<dbReference type="PANTHER" id="PTHR11715:SF3">
    <property type="entry name" value="GLYCINE CLEAVAGE SYSTEM H PROTEIN-RELATED"/>
    <property type="match status" value="1"/>
</dbReference>
<dbReference type="Pfam" id="PF01597">
    <property type="entry name" value="GCV_H"/>
    <property type="match status" value="1"/>
</dbReference>
<dbReference type="SUPFAM" id="SSF51230">
    <property type="entry name" value="Single hybrid motif"/>
    <property type="match status" value="1"/>
</dbReference>
<dbReference type="PROSITE" id="PS50968">
    <property type="entry name" value="BIOTINYL_LIPOYL"/>
    <property type="match status" value="1"/>
</dbReference>
<dbReference type="PROSITE" id="PS00189">
    <property type="entry name" value="LIPOYL"/>
    <property type="match status" value="1"/>
</dbReference>
<name>GCSH_BACC1</name>
<feature type="chain" id="PRO_0000302347" description="Glycine cleavage system H protein">
    <location>
        <begin position="1"/>
        <end position="127"/>
    </location>
</feature>
<feature type="domain" description="Lipoyl-binding" evidence="2">
    <location>
        <begin position="22"/>
        <end position="104"/>
    </location>
</feature>
<feature type="modified residue" description="N6-lipoyllysine" evidence="1">
    <location>
        <position position="63"/>
    </location>
</feature>